<sequence length="407" mass="44791">MAIENSKTGVKKVVLAYSGGLDTSAIIPWLKENYDNCEIVAFCADVGQGEEELVGLTEKALASGASECHIVDLKEEFVKDYIYPTIATGAIYEGTYLLGTSMARPIIAKAQVEVARKVGADALCHGCTGKGNDQVRFEGCFAALAPDLKVIAPWREWDMESREDLLAYLAERNIKTSASATKIYSRDANAWHISHEGGELEDPWNEPSKQVWTMTVDPLDAPDEPEYVTLKIENARVTEVNGEALSPYQALMKLNAIAAPHGVGRIDITENRLVGMKSRGCYETPGGTVMFAALRAVEELVLDKSSREWREQVAARMAHLVYDGRWFTPLCDSLLAASESLATMVNGEVVVKLYKGQAVPVKKRSPNSLYSEAFATFGQDSVYDQKHAEGFIRLYSLASRIRAYNTK</sequence>
<comment type="catalytic activity">
    <reaction evidence="1">
        <text>L-citrulline + L-aspartate + ATP = 2-(N(omega)-L-arginino)succinate + AMP + diphosphate + H(+)</text>
        <dbReference type="Rhea" id="RHEA:10932"/>
        <dbReference type="ChEBI" id="CHEBI:15378"/>
        <dbReference type="ChEBI" id="CHEBI:29991"/>
        <dbReference type="ChEBI" id="CHEBI:30616"/>
        <dbReference type="ChEBI" id="CHEBI:33019"/>
        <dbReference type="ChEBI" id="CHEBI:57472"/>
        <dbReference type="ChEBI" id="CHEBI:57743"/>
        <dbReference type="ChEBI" id="CHEBI:456215"/>
        <dbReference type="EC" id="6.3.4.5"/>
    </reaction>
</comment>
<comment type="pathway">
    <text evidence="1">Amino-acid biosynthesis; L-arginine biosynthesis; L-arginine from L-ornithine and carbamoyl phosphate: step 2/3.</text>
</comment>
<comment type="subunit">
    <text evidence="1">Homotetramer.</text>
</comment>
<comment type="subcellular location">
    <subcellularLocation>
        <location evidence="1">Cytoplasm</location>
    </subcellularLocation>
</comment>
<comment type="similarity">
    <text evidence="1">Belongs to the argininosuccinate synthase family. Type 1 subfamily.</text>
</comment>
<protein>
    <recommendedName>
        <fullName evidence="1">Argininosuccinate synthase</fullName>
        <ecNumber evidence="1">6.3.4.5</ecNumber>
    </recommendedName>
    <alternativeName>
        <fullName evidence="1">Citrulline--aspartate ligase</fullName>
    </alternativeName>
</protein>
<evidence type="ECO:0000255" key="1">
    <source>
        <dbReference type="HAMAP-Rule" id="MF_00005"/>
    </source>
</evidence>
<gene>
    <name evidence="1" type="primary">argG</name>
    <name type="ordered locus">Sama_0259</name>
</gene>
<organism>
    <name type="scientific">Shewanella amazonensis (strain ATCC BAA-1098 / SB2B)</name>
    <dbReference type="NCBI Taxonomy" id="326297"/>
    <lineage>
        <taxon>Bacteria</taxon>
        <taxon>Pseudomonadati</taxon>
        <taxon>Pseudomonadota</taxon>
        <taxon>Gammaproteobacteria</taxon>
        <taxon>Alteromonadales</taxon>
        <taxon>Shewanellaceae</taxon>
        <taxon>Shewanella</taxon>
    </lineage>
</organism>
<name>ASSY_SHEAM</name>
<feature type="chain" id="PRO_1000000430" description="Argininosuccinate synthase">
    <location>
        <begin position="1"/>
        <end position="407"/>
    </location>
</feature>
<feature type="binding site" evidence="1">
    <location>
        <begin position="16"/>
        <end position="24"/>
    </location>
    <ligand>
        <name>ATP</name>
        <dbReference type="ChEBI" id="CHEBI:30616"/>
    </ligand>
</feature>
<feature type="binding site" evidence="1">
    <location>
        <position position="44"/>
    </location>
    <ligand>
        <name>ATP</name>
        <dbReference type="ChEBI" id="CHEBI:30616"/>
    </ligand>
</feature>
<feature type="binding site" evidence="1">
    <location>
        <position position="96"/>
    </location>
    <ligand>
        <name>L-citrulline</name>
        <dbReference type="ChEBI" id="CHEBI:57743"/>
    </ligand>
</feature>
<feature type="binding site" evidence="1">
    <location>
        <position position="101"/>
    </location>
    <ligand>
        <name>L-citrulline</name>
        <dbReference type="ChEBI" id="CHEBI:57743"/>
    </ligand>
</feature>
<feature type="binding site" evidence="1">
    <location>
        <position position="126"/>
    </location>
    <ligand>
        <name>ATP</name>
        <dbReference type="ChEBI" id="CHEBI:30616"/>
    </ligand>
</feature>
<feature type="binding site" evidence="1">
    <location>
        <position position="128"/>
    </location>
    <ligand>
        <name>L-aspartate</name>
        <dbReference type="ChEBI" id="CHEBI:29991"/>
    </ligand>
</feature>
<feature type="binding site" evidence="1">
    <location>
        <position position="132"/>
    </location>
    <ligand>
        <name>L-aspartate</name>
        <dbReference type="ChEBI" id="CHEBI:29991"/>
    </ligand>
</feature>
<feature type="binding site" evidence="1">
    <location>
        <position position="132"/>
    </location>
    <ligand>
        <name>L-citrulline</name>
        <dbReference type="ChEBI" id="CHEBI:57743"/>
    </ligand>
</feature>
<feature type="binding site" evidence="1">
    <location>
        <position position="133"/>
    </location>
    <ligand>
        <name>L-aspartate</name>
        <dbReference type="ChEBI" id="CHEBI:29991"/>
    </ligand>
</feature>
<feature type="binding site" evidence="1">
    <location>
        <position position="136"/>
    </location>
    <ligand>
        <name>L-citrulline</name>
        <dbReference type="ChEBI" id="CHEBI:57743"/>
    </ligand>
</feature>
<feature type="binding site" evidence="1">
    <location>
        <position position="185"/>
    </location>
    <ligand>
        <name>L-citrulline</name>
        <dbReference type="ChEBI" id="CHEBI:57743"/>
    </ligand>
</feature>
<feature type="binding site" evidence="1">
    <location>
        <position position="194"/>
    </location>
    <ligand>
        <name>L-citrulline</name>
        <dbReference type="ChEBI" id="CHEBI:57743"/>
    </ligand>
</feature>
<feature type="binding site" evidence="1">
    <location>
        <position position="270"/>
    </location>
    <ligand>
        <name>L-citrulline</name>
        <dbReference type="ChEBI" id="CHEBI:57743"/>
    </ligand>
</feature>
<feature type="binding site" evidence="1">
    <location>
        <position position="282"/>
    </location>
    <ligand>
        <name>L-citrulline</name>
        <dbReference type="ChEBI" id="CHEBI:57743"/>
    </ligand>
</feature>
<dbReference type="EC" id="6.3.4.5" evidence="1"/>
<dbReference type="EMBL" id="CP000507">
    <property type="protein sequence ID" value="ABL98470.1"/>
    <property type="molecule type" value="Genomic_DNA"/>
</dbReference>
<dbReference type="RefSeq" id="WP_011758380.1">
    <property type="nucleotide sequence ID" value="NC_008700.1"/>
</dbReference>
<dbReference type="SMR" id="A1S264"/>
<dbReference type="STRING" id="326297.Sama_0259"/>
<dbReference type="KEGG" id="saz:Sama_0259"/>
<dbReference type="eggNOG" id="COG0137">
    <property type="taxonomic scope" value="Bacteria"/>
</dbReference>
<dbReference type="HOGENOM" id="CLU_032784_4_2_6"/>
<dbReference type="OrthoDB" id="9801641at2"/>
<dbReference type="UniPathway" id="UPA00068">
    <property type="reaction ID" value="UER00113"/>
</dbReference>
<dbReference type="Proteomes" id="UP000009175">
    <property type="component" value="Chromosome"/>
</dbReference>
<dbReference type="GO" id="GO:0005737">
    <property type="term" value="C:cytoplasm"/>
    <property type="evidence" value="ECO:0007669"/>
    <property type="project" value="UniProtKB-SubCell"/>
</dbReference>
<dbReference type="GO" id="GO:0004055">
    <property type="term" value="F:argininosuccinate synthase activity"/>
    <property type="evidence" value="ECO:0007669"/>
    <property type="project" value="UniProtKB-UniRule"/>
</dbReference>
<dbReference type="GO" id="GO:0005524">
    <property type="term" value="F:ATP binding"/>
    <property type="evidence" value="ECO:0007669"/>
    <property type="project" value="UniProtKB-UniRule"/>
</dbReference>
<dbReference type="GO" id="GO:0000053">
    <property type="term" value="P:argininosuccinate metabolic process"/>
    <property type="evidence" value="ECO:0007669"/>
    <property type="project" value="TreeGrafter"/>
</dbReference>
<dbReference type="GO" id="GO:0006526">
    <property type="term" value="P:L-arginine biosynthetic process"/>
    <property type="evidence" value="ECO:0007669"/>
    <property type="project" value="UniProtKB-UniRule"/>
</dbReference>
<dbReference type="GO" id="GO:0000050">
    <property type="term" value="P:urea cycle"/>
    <property type="evidence" value="ECO:0007669"/>
    <property type="project" value="TreeGrafter"/>
</dbReference>
<dbReference type="CDD" id="cd01999">
    <property type="entry name" value="ASS"/>
    <property type="match status" value="1"/>
</dbReference>
<dbReference type="FunFam" id="3.40.50.620:FF:000019">
    <property type="entry name" value="Argininosuccinate synthase"/>
    <property type="match status" value="1"/>
</dbReference>
<dbReference type="FunFam" id="3.90.1260.10:FF:000007">
    <property type="entry name" value="Argininosuccinate synthase"/>
    <property type="match status" value="1"/>
</dbReference>
<dbReference type="Gene3D" id="3.90.1260.10">
    <property type="entry name" value="Argininosuccinate synthetase, chain A, domain 2"/>
    <property type="match status" value="1"/>
</dbReference>
<dbReference type="Gene3D" id="3.40.50.620">
    <property type="entry name" value="HUPs"/>
    <property type="match status" value="1"/>
</dbReference>
<dbReference type="Gene3D" id="1.20.5.470">
    <property type="entry name" value="Single helix bin"/>
    <property type="match status" value="1"/>
</dbReference>
<dbReference type="HAMAP" id="MF_00005">
    <property type="entry name" value="Arg_succ_synth_type1"/>
    <property type="match status" value="1"/>
</dbReference>
<dbReference type="InterPro" id="IPR048268">
    <property type="entry name" value="Arginosuc_syn_C"/>
</dbReference>
<dbReference type="InterPro" id="IPR048267">
    <property type="entry name" value="Arginosuc_syn_N"/>
</dbReference>
<dbReference type="InterPro" id="IPR001518">
    <property type="entry name" value="Arginosuc_synth"/>
</dbReference>
<dbReference type="InterPro" id="IPR018223">
    <property type="entry name" value="Arginosuc_synth_CS"/>
</dbReference>
<dbReference type="InterPro" id="IPR023434">
    <property type="entry name" value="Arginosuc_synth_type_1_subfam"/>
</dbReference>
<dbReference type="InterPro" id="IPR024074">
    <property type="entry name" value="AS_cat/multimer_dom_body"/>
</dbReference>
<dbReference type="InterPro" id="IPR014729">
    <property type="entry name" value="Rossmann-like_a/b/a_fold"/>
</dbReference>
<dbReference type="NCBIfam" id="TIGR00032">
    <property type="entry name" value="argG"/>
    <property type="match status" value="1"/>
</dbReference>
<dbReference type="NCBIfam" id="NF001770">
    <property type="entry name" value="PRK00509.1"/>
    <property type="match status" value="1"/>
</dbReference>
<dbReference type="PANTHER" id="PTHR11587">
    <property type="entry name" value="ARGININOSUCCINATE SYNTHASE"/>
    <property type="match status" value="1"/>
</dbReference>
<dbReference type="PANTHER" id="PTHR11587:SF2">
    <property type="entry name" value="ARGININOSUCCINATE SYNTHASE"/>
    <property type="match status" value="1"/>
</dbReference>
<dbReference type="Pfam" id="PF20979">
    <property type="entry name" value="Arginosuc_syn_C"/>
    <property type="match status" value="1"/>
</dbReference>
<dbReference type="Pfam" id="PF00764">
    <property type="entry name" value="Arginosuc_synth"/>
    <property type="match status" value="1"/>
</dbReference>
<dbReference type="SUPFAM" id="SSF52402">
    <property type="entry name" value="Adenine nucleotide alpha hydrolases-like"/>
    <property type="match status" value="1"/>
</dbReference>
<dbReference type="SUPFAM" id="SSF69864">
    <property type="entry name" value="Argininosuccinate synthetase, C-terminal domain"/>
    <property type="match status" value="1"/>
</dbReference>
<dbReference type="PROSITE" id="PS00564">
    <property type="entry name" value="ARGININOSUCCIN_SYN_1"/>
    <property type="match status" value="1"/>
</dbReference>
<dbReference type="PROSITE" id="PS00565">
    <property type="entry name" value="ARGININOSUCCIN_SYN_2"/>
    <property type="match status" value="1"/>
</dbReference>
<proteinExistence type="inferred from homology"/>
<reference key="1">
    <citation type="submission" date="2006-12" db="EMBL/GenBank/DDBJ databases">
        <title>Complete sequence of Shewanella amazonensis SB2B.</title>
        <authorList>
            <consortium name="US DOE Joint Genome Institute"/>
            <person name="Copeland A."/>
            <person name="Lucas S."/>
            <person name="Lapidus A."/>
            <person name="Barry K."/>
            <person name="Detter J.C."/>
            <person name="Glavina del Rio T."/>
            <person name="Hammon N."/>
            <person name="Israni S."/>
            <person name="Dalin E."/>
            <person name="Tice H."/>
            <person name="Pitluck S."/>
            <person name="Munk A.C."/>
            <person name="Brettin T."/>
            <person name="Bruce D."/>
            <person name="Han C."/>
            <person name="Tapia R."/>
            <person name="Gilna P."/>
            <person name="Schmutz J."/>
            <person name="Larimer F."/>
            <person name="Land M."/>
            <person name="Hauser L."/>
            <person name="Kyrpides N."/>
            <person name="Mikhailova N."/>
            <person name="Fredrickson J."/>
            <person name="Richardson P."/>
        </authorList>
    </citation>
    <scope>NUCLEOTIDE SEQUENCE [LARGE SCALE GENOMIC DNA]</scope>
    <source>
        <strain>ATCC BAA-1098 / SB2B</strain>
    </source>
</reference>
<keyword id="KW-0028">Amino-acid biosynthesis</keyword>
<keyword id="KW-0055">Arginine biosynthesis</keyword>
<keyword id="KW-0067">ATP-binding</keyword>
<keyword id="KW-0963">Cytoplasm</keyword>
<keyword id="KW-0436">Ligase</keyword>
<keyword id="KW-0547">Nucleotide-binding</keyword>
<keyword id="KW-1185">Reference proteome</keyword>
<accession>A1S264</accession>